<sequence>MAAPTLGRLVLTHLLVALFGMGSWAAVNGIWVELPVVVKDLPEGWSLPSYLSVVVALGNLGLLVVTLWRQLAPGKGEQVPIQVVQVLSVVGTALLAPLWHHVAPVAGQLHSVAFLTLALVLAMACCTSNVTFLPFLSHLPPPFLRSFFLGQGLSALLPCVLALVQGVGRLECPPAPTNGTSGPPLDFPERFPASTFFWALTALLVTSAAAFRGLLLLLPSLPSVTTGGSGPELQLGSPGAEEEEKEEEEALPLQEPPSQAAGTIPGPDPEAHQLFSAHGAFLLGLMAFTSAVTNGVLPSVQSFSCLPYGRLAYHLAVVLGSAANPLACFLAMGVLCRSLAGLVGLSLLGMLFGAYLMALAILSPCPPLVGTTAGVVLVVLSWVLCLCVFSYVKVAASSLLHGGGRPALLAAGVAIQVGSLLGAGAMFPPTSIYHVFQSRKDCVDPCGP</sequence>
<feature type="chain" id="PRO_0000042632" description="Solute carrier family 52, riboflavin transporter, member 1">
    <location>
        <begin position="1"/>
        <end position="448"/>
    </location>
</feature>
<feature type="transmembrane region" description="Helical" evidence="1">
    <location>
        <begin position="14"/>
        <end position="34"/>
    </location>
</feature>
<feature type="transmembrane region" description="Helical" evidence="1">
    <location>
        <begin position="47"/>
        <end position="67"/>
    </location>
</feature>
<feature type="transmembrane region" description="Helical" evidence="1">
    <location>
        <begin position="79"/>
        <end position="99"/>
    </location>
</feature>
<feature type="transmembrane region" description="Helical" evidence="1">
    <location>
        <begin position="124"/>
        <end position="144"/>
    </location>
</feature>
<feature type="transmembrane region" description="Helical" evidence="1">
    <location>
        <begin position="147"/>
        <end position="167"/>
    </location>
</feature>
<feature type="transmembrane region" description="Helical" evidence="1">
    <location>
        <begin position="191"/>
        <end position="211"/>
    </location>
</feature>
<feature type="transmembrane region" description="Helical" evidence="1">
    <location>
        <begin position="280"/>
        <end position="300"/>
    </location>
</feature>
<feature type="transmembrane region" description="Helical" evidence="1">
    <location>
        <begin position="315"/>
        <end position="335"/>
    </location>
</feature>
<feature type="transmembrane region" description="Helical" evidence="1">
    <location>
        <begin position="342"/>
        <end position="362"/>
    </location>
</feature>
<feature type="transmembrane region" description="Helical" evidence="1">
    <location>
        <begin position="369"/>
        <end position="389"/>
    </location>
</feature>
<feature type="transmembrane region" description="Helical" evidence="1">
    <location>
        <begin position="407"/>
        <end position="427"/>
    </location>
</feature>
<feature type="region of interest" description="Disordered" evidence="2">
    <location>
        <begin position="225"/>
        <end position="267"/>
    </location>
</feature>
<feature type="compositionally biased region" description="Acidic residues" evidence="2">
    <location>
        <begin position="240"/>
        <end position="250"/>
    </location>
</feature>
<feature type="glycosylation site" description="N-linked (GlcNAc...) asparagine" evidence="1">
    <location>
        <position position="178"/>
    </location>
</feature>
<feature type="splice variant" id="VSP_039888" description="In isoform 2." evidence="12">
    <original>WSLPSYLSVVVALGNLGLLVVTLWRQLAPGKGEQVPIQVVQVLSVVGTALLAPLWHHVAPVAGQLHSVAFLTLALVLAMACCTSNVTFLPFLSHLPPPFLRSFFLGQGLSALLPCVLALVQGV</original>
    <variation>EWEGGTGKRGAGMPRKVACGSSLSLSHCAPDMASFLPCRLEPPLIPLCGCGAGKPGSAGGDPVEAAGPGQGRAGPHPGGTGAECSGHSPAGPSVAPRGPSGRAAPLCGLPNSGLGVGNGLLYL</variation>
    <location>
        <begin position="45"/>
        <end position="167"/>
    </location>
</feature>
<feature type="splice variant" id="VSP_039889" description="In isoform 2." evidence="12">
    <location>
        <begin position="168"/>
        <end position="448"/>
    </location>
</feature>
<feature type="sequence variant" id="VAR_028361" description="Riboflavin transport is unaffected; dbSNP:rs346822." evidence="4 5 6 8 10">
    <original>Q</original>
    <variation>R</variation>
    <location>
        <position position="70"/>
    </location>
</feature>
<feature type="sequence variant" id="VAR_028362" description="In dbSNP:rs346821." evidence="5 8">
    <original>A</original>
    <variation>V</variation>
    <location>
        <position position="271"/>
    </location>
</feature>
<feature type="sequence variant" id="VAR_028363" description="Riboflavin transport is unaffected; dbSNP:rs2304445." evidence="8">
    <original>V</original>
    <variation>M</variation>
    <location>
        <position position="296"/>
    </location>
</feature>
<feature type="sequence variant" id="VAR_079006" description="In dbSNP:rs187609896." evidence="9">
    <original>L</original>
    <variation>V</variation>
    <location>
        <position position="386"/>
    </location>
</feature>
<organism>
    <name type="scientific">Homo sapiens</name>
    <name type="common">Human</name>
    <dbReference type="NCBI Taxonomy" id="9606"/>
    <lineage>
        <taxon>Eukaryota</taxon>
        <taxon>Metazoa</taxon>
        <taxon>Chordata</taxon>
        <taxon>Craniata</taxon>
        <taxon>Vertebrata</taxon>
        <taxon>Euteleostomi</taxon>
        <taxon>Mammalia</taxon>
        <taxon>Eutheria</taxon>
        <taxon>Euarchontoglires</taxon>
        <taxon>Primates</taxon>
        <taxon>Haplorrhini</taxon>
        <taxon>Catarrhini</taxon>
        <taxon>Hominidae</taxon>
        <taxon>Homo</taxon>
    </lineage>
</organism>
<reference key="1">
    <citation type="journal article" date="2003" name="Proc. Natl. Acad. Sci. U.S.A.">
        <title>Identification of receptors for pig endogenous retrovirus.</title>
        <authorList>
            <person name="Ericsson T.A."/>
            <person name="Takeuchi Y."/>
            <person name="Templin C."/>
            <person name="Quinn G."/>
            <person name="Farhadian S.F."/>
            <person name="Wood J.C."/>
            <person name="Oldmixon B.A."/>
            <person name="Suling K.M."/>
            <person name="Ishii J.K."/>
            <person name="Kitagawa Y."/>
            <person name="Miyazawa T."/>
            <person name="Salomon D.R."/>
            <person name="Weiss R.A."/>
            <person name="Patience C."/>
        </authorList>
    </citation>
    <scope>NUCLEOTIDE SEQUENCE [MRNA] (ISOFORM 1)</scope>
    <scope>FUNCTION AS A VIRAL RECEPTOR (MICROBIAL INFECTION)</scope>
    <scope>SUBCELLULAR LOCATION</scope>
    <scope>TISSUE SPECIFICITY</scope>
</reference>
<reference key="2">
    <citation type="journal article" date="2008" name="Am. J. Physiol.">
        <title>Identification and functional characterization of a novel human and rat riboflavin transporter, RFT1.</title>
        <authorList>
            <person name="Yonezawa A."/>
            <person name="Masuda S."/>
            <person name="Katsura T."/>
            <person name="Inui K."/>
        </authorList>
    </citation>
    <scope>NUCLEOTIDE SEQUENCE [MRNA] (ISOFORMS 1 AND 2)</scope>
    <scope>VARIANT ARG-70</scope>
    <scope>FUNCTION</scope>
    <scope>TRANSPORTER ACTIVITY</scope>
    <scope>SUBCELLULAR LOCATION</scope>
    <scope>ACTIVITY REGULATION</scope>
    <scope>TISSUE SPECIFICITY</scope>
</reference>
<reference key="3">
    <citation type="journal article" date="2004" name="Nat. Genet.">
        <title>Complete sequencing and characterization of 21,243 full-length human cDNAs.</title>
        <authorList>
            <person name="Ota T."/>
            <person name="Suzuki Y."/>
            <person name="Nishikawa T."/>
            <person name="Otsuki T."/>
            <person name="Sugiyama T."/>
            <person name="Irie R."/>
            <person name="Wakamatsu A."/>
            <person name="Hayashi K."/>
            <person name="Sato H."/>
            <person name="Nagai K."/>
            <person name="Kimura K."/>
            <person name="Makita H."/>
            <person name="Sekine M."/>
            <person name="Obayashi M."/>
            <person name="Nishi T."/>
            <person name="Shibahara T."/>
            <person name="Tanaka T."/>
            <person name="Ishii S."/>
            <person name="Yamamoto J."/>
            <person name="Saito K."/>
            <person name="Kawai Y."/>
            <person name="Isono Y."/>
            <person name="Nakamura Y."/>
            <person name="Nagahari K."/>
            <person name="Murakami K."/>
            <person name="Yasuda T."/>
            <person name="Iwayanagi T."/>
            <person name="Wagatsuma M."/>
            <person name="Shiratori A."/>
            <person name="Sudo H."/>
            <person name="Hosoiri T."/>
            <person name="Kaku Y."/>
            <person name="Kodaira H."/>
            <person name="Kondo H."/>
            <person name="Sugawara M."/>
            <person name="Takahashi M."/>
            <person name="Kanda K."/>
            <person name="Yokoi T."/>
            <person name="Furuya T."/>
            <person name="Kikkawa E."/>
            <person name="Omura Y."/>
            <person name="Abe K."/>
            <person name="Kamihara K."/>
            <person name="Katsuta N."/>
            <person name="Sato K."/>
            <person name="Tanikawa M."/>
            <person name="Yamazaki M."/>
            <person name="Ninomiya K."/>
            <person name="Ishibashi T."/>
            <person name="Yamashita H."/>
            <person name="Murakawa K."/>
            <person name="Fujimori K."/>
            <person name="Tanai H."/>
            <person name="Kimata M."/>
            <person name="Watanabe M."/>
            <person name="Hiraoka S."/>
            <person name="Chiba Y."/>
            <person name="Ishida S."/>
            <person name="Ono Y."/>
            <person name="Takiguchi S."/>
            <person name="Watanabe S."/>
            <person name="Yosida M."/>
            <person name="Hotuta T."/>
            <person name="Kusano J."/>
            <person name="Kanehori K."/>
            <person name="Takahashi-Fujii A."/>
            <person name="Hara H."/>
            <person name="Tanase T.-O."/>
            <person name="Nomura Y."/>
            <person name="Togiya S."/>
            <person name="Komai F."/>
            <person name="Hara R."/>
            <person name="Takeuchi K."/>
            <person name="Arita M."/>
            <person name="Imose N."/>
            <person name="Musashino K."/>
            <person name="Yuuki H."/>
            <person name="Oshima A."/>
            <person name="Sasaki N."/>
            <person name="Aotsuka S."/>
            <person name="Yoshikawa Y."/>
            <person name="Matsunawa H."/>
            <person name="Ichihara T."/>
            <person name="Shiohata N."/>
            <person name="Sano S."/>
            <person name="Moriya S."/>
            <person name="Momiyama H."/>
            <person name="Satoh N."/>
            <person name="Takami S."/>
            <person name="Terashima Y."/>
            <person name="Suzuki O."/>
            <person name="Nakagawa S."/>
            <person name="Senoh A."/>
            <person name="Mizoguchi H."/>
            <person name="Goto Y."/>
            <person name="Shimizu F."/>
            <person name="Wakebe H."/>
            <person name="Hishigaki H."/>
            <person name="Watanabe T."/>
            <person name="Sugiyama A."/>
            <person name="Takemoto M."/>
            <person name="Kawakami B."/>
            <person name="Yamazaki M."/>
            <person name="Watanabe K."/>
            <person name="Kumagai A."/>
            <person name="Itakura S."/>
            <person name="Fukuzumi Y."/>
            <person name="Fujimori Y."/>
            <person name="Komiyama M."/>
            <person name="Tashiro H."/>
            <person name="Tanigami A."/>
            <person name="Fujiwara T."/>
            <person name="Ono T."/>
            <person name="Yamada K."/>
            <person name="Fujii Y."/>
            <person name="Ozaki K."/>
            <person name="Hirao M."/>
            <person name="Ohmori Y."/>
            <person name="Kawabata A."/>
            <person name="Hikiji T."/>
            <person name="Kobatake N."/>
            <person name="Inagaki H."/>
            <person name="Ikema Y."/>
            <person name="Okamoto S."/>
            <person name="Okitani R."/>
            <person name="Kawakami T."/>
            <person name="Noguchi S."/>
            <person name="Itoh T."/>
            <person name="Shigeta K."/>
            <person name="Senba T."/>
            <person name="Matsumura K."/>
            <person name="Nakajima Y."/>
            <person name="Mizuno T."/>
            <person name="Morinaga M."/>
            <person name="Sasaki M."/>
            <person name="Togashi T."/>
            <person name="Oyama M."/>
            <person name="Hata H."/>
            <person name="Watanabe M."/>
            <person name="Komatsu T."/>
            <person name="Mizushima-Sugano J."/>
            <person name="Satoh T."/>
            <person name="Shirai Y."/>
            <person name="Takahashi Y."/>
            <person name="Nakagawa K."/>
            <person name="Okumura K."/>
            <person name="Nagase T."/>
            <person name="Nomura N."/>
            <person name="Kikuchi H."/>
            <person name="Masuho Y."/>
            <person name="Yamashita R."/>
            <person name="Nakai K."/>
            <person name="Yada T."/>
            <person name="Nakamura Y."/>
            <person name="Ohara O."/>
            <person name="Isogai T."/>
            <person name="Sugano S."/>
        </authorList>
    </citation>
    <scope>NUCLEOTIDE SEQUENCE [LARGE SCALE MRNA] (ISOFORM 1)</scope>
    <scope>VARIANT ARG-70</scope>
    <source>
        <tissue>Embryo</tissue>
    </source>
</reference>
<reference key="4">
    <citation type="journal article" date="2006" name="Nature">
        <title>DNA sequence of human chromosome 17 and analysis of rearrangement in the human lineage.</title>
        <authorList>
            <person name="Zody M.C."/>
            <person name="Garber M."/>
            <person name="Adams D.J."/>
            <person name="Sharpe T."/>
            <person name="Harrow J."/>
            <person name="Lupski J.R."/>
            <person name="Nicholson C."/>
            <person name="Searle S.M."/>
            <person name="Wilming L."/>
            <person name="Young S.K."/>
            <person name="Abouelleil A."/>
            <person name="Allen N.R."/>
            <person name="Bi W."/>
            <person name="Bloom T."/>
            <person name="Borowsky M.L."/>
            <person name="Bugalter B.E."/>
            <person name="Butler J."/>
            <person name="Chang J.L."/>
            <person name="Chen C.-K."/>
            <person name="Cook A."/>
            <person name="Corum B."/>
            <person name="Cuomo C.A."/>
            <person name="de Jong P.J."/>
            <person name="DeCaprio D."/>
            <person name="Dewar K."/>
            <person name="FitzGerald M."/>
            <person name="Gilbert J."/>
            <person name="Gibson R."/>
            <person name="Gnerre S."/>
            <person name="Goldstein S."/>
            <person name="Grafham D.V."/>
            <person name="Grocock R."/>
            <person name="Hafez N."/>
            <person name="Hagopian D.S."/>
            <person name="Hart E."/>
            <person name="Norman C.H."/>
            <person name="Humphray S."/>
            <person name="Jaffe D.B."/>
            <person name="Jones M."/>
            <person name="Kamal M."/>
            <person name="Khodiyar V.K."/>
            <person name="LaButti K."/>
            <person name="Laird G."/>
            <person name="Lehoczky J."/>
            <person name="Liu X."/>
            <person name="Lokyitsang T."/>
            <person name="Loveland J."/>
            <person name="Lui A."/>
            <person name="Macdonald P."/>
            <person name="Major J.E."/>
            <person name="Matthews L."/>
            <person name="Mauceli E."/>
            <person name="McCarroll S.A."/>
            <person name="Mihalev A.H."/>
            <person name="Mudge J."/>
            <person name="Nguyen C."/>
            <person name="Nicol R."/>
            <person name="O'Leary S.B."/>
            <person name="Osoegawa K."/>
            <person name="Schwartz D.C."/>
            <person name="Shaw-Smith C."/>
            <person name="Stankiewicz P."/>
            <person name="Steward C."/>
            <person name="Swarbreck D."/>
            <person name="Venkataraman V."/>
            <person name="Whittaker C.A."/>
            <person name="Yang X."/>
            <person name="Zimmer A.R."/>
            <person name="Bradley A."/>
            <person name="Hubbard T."/>
            <person name="Birren B.W."/>
            <person name="Rogers J."/>
            <person name="Lander E.S."/>
            <person name="Nusbaum C."/>
        </authorList>
    </citation>
    <scope>NUCLEOTIDE SEQUENCE [LARGE SCALE GENOMIC DNA]</scope>
</reference>
<reference key="5">
    <citation type="submission" date="2005-09" db="EMBL/GenBank/DDBJ databases">
        <authorList>
            <person name="Mural R.J."/>
            <person name="Istrail S."/>
            <person name="Sutton G.G."/>
            <person name="Florea L."/>
            <person name="Halpern A.L."/>
            <person name="Mobarry C.M."/>
            <person name="Lippert R."/>
            <person name="Walenz B."/>
            <person name="Shatkay H."/>
            <person name="Dew I."/>
            <person name="Miller J.R."/>
            <person name="Flanigan M.J."/>
            <person name="Edwards N.J."/>
            <person name="Bolanos R."/>
            <person name="Fasulo D."/>
            <person name="Halldorsson B.V."/>
            <person name="Hannenhalli S."/>
            <person name="Turner R."/>
            <person name="Yooseph S."/>
            <person name="Lu F."/>
            <person name="Nusskern D.R."/>
            <person name="Shue B.C."/>
            <person name="Zheng X.H."/>
            <person name="Zhong F."/>
            <person name="Delcher A.L."/>
            <person name="Huson D.H."/>
            <person name="Kravitz S.A."/>
            <person name="Mouchard L."/>
            <person name="Reinert K."/>
            <person name="Remington K.A."/>
            <person name="Clark A.G."/>
            <person name="Waterman M.S."/>
            <person name="Eichler E.E."/>
            <person name="Adams M.D."/>
            <person name="Hunkapiller M.W."/>
            <person name="Myers E.W."/>
            <person name="Venter J.C."/>
        </authorList>
    </citation>
    <scope>NUCLEOTIDE SEQUENCE [LARGE SCALE GENOMIC DNA]</scope>
    <scope>VARIANT ARG-70</scope>
</reference>
<reference key="6">
    <citation type="journal article" date="2004" name="Genome Res.">
        <title>The status, quality, and expansion of the NIH full-length cDNA project: the Mammalian Gene Collection (MGC).</title>
        <authorList>
            <consortium name="The MGC Project Team"/>
        </authorList>
    </citation>
    <scope>NUCLEOTIDE SEQUENCE [LARGE SCALE MRNA] (ISOFORM 1)</scope>
    <scope>VARIANTS ARG-70 AND VAL-271</scope>
    <source>
        <tissue>Placenta</tissue>
    </source>
</reference>
<reference key="7">
    <citation type="journal article" date="2010" name="J. Nutr.">
        <title>Identification and comparative functional characterization of a new human riboflavin transporter hRFT3 expressed in the brain.</title>
        <authorList>
            <person name="Yao Y."/>
            <person name="Yonezawa A."/>
            <person name="Yoshimatsu H."/>
            <person name="Masuda S."/>
            <person name="Katsura T."/>
            <person name="Inui K."/>
        </authorList>
    </citation>
    <scope>FUNCTION</scope>
    <scope>TRANSPORTER ACTIVITY</scope>
    <scope>BIOPHYSICOCHEMICAL PROPERTIES</scope>
    <scope>ACTIVITY REGULATION</scope>
    <scope>SUBCELLULAR LOCATION</scope>
    <scope>TISSUE SPECIFICITY</scope>
</reference>
<reference key="8">
    <citation type="journal article" date="2011" name="Hum. Mutat.">
        <title>Maternal riboflavin deficiency, resulting in transient neonatal-onset glutaric aciduria Type 2, is caused by a microdeletion in the riboflavin transporter gene GPR172B.</title>
        <authorList>
            <person name="Ho G."/>
            <person name="Yonezawa A."/>
            <person name="Masuda S."/>
            <person name="Inui K."/>
            <person name="Sim K.G."/>
            <person name="Carpenter K."/>
            <person name="Olsen R.K."/>
            <person name="Mitchell J.J."/>
            <person name="Rhead W.J."/>
            <person name="Peters G."/>
            <person name="Christodoulou J."/>
        </authorList>
    </citation>
    <scope>VARIANTS ARG-70; VAL-271 AND MET-296</scope>
    <scope>CHARACTERIZATION OF VARIANTS ARG-70 AND MET-296</scope>
    <scope>INVOLVEMENT IN RBFVD</scope>
</reference>
<reference key="9">
    <citation type="journal article" date="2017" name="Am. J. Hum. Genet.">
        <title>Mutations in INPP5K, Encoding a Phosphoinositide 5-Phosphatase, Cause Congenital muscular dystrophy with cataracts and mild cognitive impairment.</title>
        <authorList>
            <person name="Wiessner M."/>
            <person name="Roos A."/>
            <person name="Munn C.J."/>
            <person name="Viswanathan R."/>
            <person name="Whyte T."/>
            <person name="Cox D."/>
            <person name="Schoser B."/>
            <person name="Sewry C."/>
            <person name="Roper H."/>
            <person name="Phadke R."/>
            <person name="Marini Bettolo C."/>
            <person name="Barresi R."/>
            <person name="Charlton R."/>
            <person name="Boennemann C.G."/>
            <person name="Abath Neto O."/>
            <person name="Reed U.C."/>
            <person name="Zanoteli E."/>
            <person name="Araujo Martins Moreno C."/>
            <person name="Ertl-Wagner B."/>
            <person name="Stucka R."/>
            <person name="De Goede C."/>
            <person name="Borges da Silva T."/>
            <person name="Hathazi D."/>
            <person name="Dell'Aica M."/>
            <person name="Zahedi R.P."/>
            <person name="Thiele S."/>
            <person name="Mueller J."/>
            <person name="Kingston H."/>
            <person name="Mueller S."/>
            <person name="Curtis E."/>
            <person name="Walter M.C."/>
            <person name="Strom T.M."/>
            <person name="Straub V."/>
            <person name="Bushby K."/>
            <person name="Muntoni F."/>
            <person name="Swan L.E."/>
            <person name="Lochmueller H."/>
            <person name="Senderek J."/>
        </authorList>
    </citation>
    <scope>VARIANT VAL-386</scope>
</reference>
<comment type="function">
    <text evidence="6 7 13">Plasma membrane transporter mediating the uptake by cells of the water soluble vitamin B2/riboflavin that plays a key role in biochemical oxidation-reduction reactions of the carbohydrate, lipid, and amino acid metabolism (PubMed:18632736, PubMed:20463145). Humans are unable to synthesize vitamin B2/riboflavin and must obtain it via intestinal absorption (PubMed:20463145).</text>
</comment>
<comment type="function">
    <text evidence="15">(Microbial infection) May function as a cell receptor to retroviral envelopes similar to the porcine endogenous retrovirus (PERV-A).</text>
</comment>
<comment type="catalytic activity">
    <reaction evidence="6 7">
        <text>riboflavin(in) = riboflavin(out)</text>
        <dbReference type="Rhea" id="RHEA:35015"/>
        <dbReference type="ChEBI" id="CHEBI:57986"/>
    </reaction>
</comment>
<comment type="activity regulation">
    <text evidence="6 7">The activity is strongly inhibited by riboflavin analogs, such as lumiflavin (PubMed:18632736, PubMed:20463145). Weakly inhibited by flavin adenine dinucleotide (FAD) (PubMed:18632736, PubMed:20463145).</text>
</comment>
<comment type="biophysicochemical properties">
    <kinetics>
        <KM evidence="7">1.38 uM for riboflavin</KM>
    </kinetics>
</comment>
<comment type="interaction">
    <interactant intactId="EBI-12904614">
        <id>Q9NWF4</id>
    </interactant>
    <interactant intactId="EBI-13059134">
        <id>Q13520</id>
        <label>AQP6</label>
    </interactant>
    <organismsDiffer>false</organismsDiffer>
    <experiments>3</experiments>
</comment>
<comment type="interaction">
    <interactant intactId="EBI-12904614">
        <id>Q9NWF4</id>
    </interactant>
    <interactant intactId="EBI-6942903">
        <id>Q96BA8</id>
        <label>CREB3L1</label>
    </interactant>
    <organismsDiffer>false</organismsDiffer>
    <experiments>3</experiments>
</comment>
<comment type="interaction">
    <interactant intactId="EBI-12904614">
        <id>Q9NWF4</id>
    </interactant>
    <interactant intactId="EBI-17458373">
        <id>P48165</id>
        <label>GJA8</label>
    </interactant>
    <organismsDiffer>false</organismsDiffer>
    <experiments>3</experiments>
</comment>
<comment type="interaction">
    <interactant intactId="EBI-12904614">
        <id>Q9NWF4</id>
    </interactant>
    <interactant intactId="EBI-3905457">
        <id>P38484</id>
        <label>IFNGR2</label>
    </interactant>
    <organismsDiffer>false</organismsDiffer>
    <experiments>3</experiments>
</comment>
<comment type="interaction">
    <interactant intactId="EBI-12904614">
        <id>Q9NWF4</id>
    </interactant>
    <interactant intactId="EBI-5663627">
        <id>Q16585</id>
        <label>SGCB</label>
    </interactant>
    <organismsDiffer>false</organismsDiffer>
    <experiments>3</experiments>
</comment>
<comment type="interaction">
    <interactant intactId="EBI-12904614">
        <id>Q9NWF4</id>
    </interactant>
    <interactant intactId="EBI-18037857">
        <id>Q3SXP7</id>
        <label>SHISAL1</label>
    </interactant>
    <organismsDiffer>false</organismsDiffer>
    <experiments>3</experiments>
</comment>
<comment type="interaction">
    <interactant intactId="EBI-12904614">
        <id>Q9NWF4</id>
    </interactant>
    <interactant intactId="EBI-4289564">
        <id>P30825</id>
        <label>SLC7A1</label>
    </interactant>
    <organismsDiffer>false</organismsDiffer>
    <experiments>3</experiments>
</comment>
<comment type="interaction">
    <interactant intactId="EBI-12904614">
        <id>Q9NWF4</id>
    </interactant>
    <interactant intactId="EBI-11724423">
        <id>Q7Z7N9</id>
        <label>TMEM179B</label>
    </interactant>
    <organismsDiffer>false</organismsDiffer>
    <experiments>3</experiments>
</comment>
<comment type="interaction">
    <interactant intactId="EBI-12904614">
        <id>Q9NWF4</id>
    </interactant>
    <interactant intactId="EBI-10982110">
        <id>Q96Q45-2</id>
        <label>TMEM237</label>
    </interactant>
    <organismsDiffer>false</organismsDiffer>
    <experiments>3</experiments>
</comment>
<comment type="subcellular location">
    <subcellularLocation>
        <location evidence="3 6 7">Cell membrane</location>
        <topology evidence="1">Multi-pass membrane protein</topology>
    </subcellularLocation>
</comment>
<comment type="alternative products">
    <event type="alternative splicing"/>
    <isoform>
        <id>Q9NWF4-1</id>
        <name>1</name>
        <sequence type="displayed"/>
    </isoform>
    <isoform>
        <id>Q9NWF4-2</id>
        <name>2</name>
        <name>RFT1sv</name>
        <sequence type="described" ref="VSP_039888 VSP_039889"/>
    </isoform>
</comment>
<comment type="tissue specificity">
    <text evidence="3 6 7">Widely expressed. Highly expressed in the testis, placenta and small intestine. Expressed at lower level in other tissues.</text>
</comment>
<comment type="disease" evidence="8">
    <disease id="DI-03674">
        <name>Riboflavin deficiency</name>
        <acronym>RBFVD</acronym>
        <description>A disorder caused by a primary defect in riboflavin metabolism, or by dietary riboflavin deficiency. Riboflavin deficiency during pregnancy results in hypoglycemia, metabolic acidosis, dicarboxylic aciduria and elevated plasma acylcarnitine levels in the newborn. Treatment with oral riboflavin results in complete resolution of the clinical and biochemical findings.</description>
        <dbReference type="MIM" id="615026"/>
    </disease>
    <text>The disease is caused by variants affecting the gene represented in this entry.</text>
</comment>
<comment type="miscellaneous">
    <molecule>Isoform 2</molecule>
    <text evidence="14">May be produced at very low levels due to a premature stop codon in the mRNA, leading to nonsense-mediated mRNA decay.</text>
</comment>
<comment type="similarity">
    <text evidence="14">Belongs to the riboflavin transporter family.</text>
</comment>
<protein>
    <recommendedName>
        <fullName>Solute carrier family 52, riboflavin transporter, member 1</fullName>
    </recommendedName>
    <alternativeName>
        <fullName evidence="11">Porcine endogenous retrovirus A receptor 2</fullName>
        <shortName evidence="11">PERV-A receptor 2</shortName>
        <shortName evidence="11">huPAR-2</shortName>
    </alternativeName>
    <alternativeName>
        <fullName>Protein GPR172B</fullName>
    </alternativeName>
    <alternativeName>
        <fullName>Riboflavin transporter 1</fullName>
        <shortName>hRFT1</shortName>
    </alternativeName>
</protein>
<proteinExistence type="evidence at protein level"/>
<keyword id="KW-0025">Alternative splicing</keyword>
<keyword id="KW-1003">Cell membrane</keyword>
<keyword id="KW-0325">Glycoprotein</keyword>
<keyword id="KW-1183">Host cell receptor for virus entry</keyword>
<keyword id="KW-0472">Membrane</keyword>
<keyword id="KW-0675">Receptor</keyword>
<keyword id="KW-1185">Reference proteome</keyword>
<keyword id="KW-0812">Transmembrane</keyword>
<keyword id="KW-1133">Transmembrane helix</keyword>
<keyword id="KW-0813">Transport</keyword>
<accession>Q9NWF4</accession>
<accession>B5MEV1</accession>
<accession>B5MEV2</accession>
<accession>Q6P9E0</accession>
<accession>Q86UT0</accession>
<dbReference type="EMBL" id="AY070775">
    <property type="protein sequence ID" value="AAL59883.1"/>
    <property type="molecule type" value="mRNA"/>
</dbReference>
<dbReference type="EMBL" id="AB362533">
    <property type="protein sequence ID" value="BAG71128.1"/>
    <property type="molecule type" value="mRNA"/>
</dbReference>
<dbReference type="EMBL" id="AB362534">
    <property type="protein sequence ID" value="BAG71129.1"/>
    <property type="molecule type" value="mRNA"/>
</dbReference>
<dbReference type="EMBL" id="AK000922">
    <property type="protein sequence ID" value="BAA91427.1"/>
    <property type="molecule type" value="mRNA"/>
</dbReference>
<dbReference type="EMBL" id="AC012146">
    <property type="status" value="NOT_ANNOTATED_CDS"/>
    <property type="molecule type" value="Genomic_DNA"/>
</dbReference>
<dbReference type="EMBL" id="CH471108">
    <property type="protein sequence ID" value="EAW90363.1"/>
    <property type="molecule type" value="Genomic_DNA"/>
</dbReference>
<dbReference type="EMBL" id="CH471108">
    <property type="protein sequence ID" value="EAW90364.1"/>
    <property type="molecule type" value="Genomic_DNA"/>
</dbReference>
<dbReference type="EMBL" id="BC060810">
    <property type="protein sequence ID" value="AAH60810.1"/>
    <property type="molecule type" value="mRNA"/>
</dbReference>
<dbReference type="EMBL" id="BC092473">
    <property type="protein sequence ID" value="AAH92473.1"/>
    <property type="molecule type" value="mRNA"/>
</dbReference>
<dbReference type="CCDS" id="CCDS11066.1">
    <molecule id="Q9NWF4-1"/>
</dbReference>
<dbReference type="RefSeq" id="NP_001098047.1">
    <molecule id="Q9NWF4-1"/>
    <property type="nucleotide sequence ID" value="NM_001104577.2"/>
</dbReference>
<dbReference type="RefSeq" id="NP_060456.3">
    <molecule id="Q9NWF4-1"/>
    <property type="nucleotide sequence ID" value="NM_017986.3"/>
</dbReference>
<dbReference type="RefSeq" id="XP_011522253.1">
    <molecule id="Q9NWF4-1"/>
    <property type="nucleotide sequence ID" value="XM_011523951.3"/>
</dbReference>
<dbReference type="RefSeq" id="XP_047292294.1">
    <molecule id="Q9NWF4-1"/>
    <property type="nucleotide sequence ID" value="XM_047436338.1"/>
</dbReference>
<dbReference type="RefSeq" id="XP_047292295.1">
    <molecule id="Q9NWF4-1"/>
    <property type="nucleotide sequence ID" value="XM_047436339.1"/>
</dbReference>
<dbReference type="SMR" id="Q9NWF4"/>
<dbReference type="BioGRID" id="120383">
    <property type="interactions" value="9"/>
</dbReference>
<dbReference type="FunCoup" id="Q9NWF4">
    <property type="interactions" value="189"/>
</dbReference>
<dbReference type="IntAct" id="Q9NWF4">
    <property type="interactions" value="9"/>
</dbReference>
<dbReference type="STRING" id="9606.ENSP00000399979"/>
<dbReference type="TCDB" id="2.A.125.1.1">
    <property type="family name" value="the eukaryotic riboflavin transporter (e-rft) family"/>
</dbReference>
<dbReference type="GlyCosmos" id="Q9NWF4">
    <property type="glycosylation" value="1 site, No reported glycans"/>
</dbReference>
<dbReference type="GlyGen" id="Q9NWF4">
    <property type="glycosylation" value="1 site"/>
</dbReference>
<dbReference type="iPTMnet" id="Q9NWF4"/>
<dbReference type="PhosphoSitePlus" id="Q9NWF4"/>
<dbReference type="BioMuta" id="SLC52A1"/>
<dbReference type="DMDM" id="308153487"/>
<dbReference type="jPOST" id="Q9NWF4"/>
<dbReference type="MassIVE" id="Q9NWF4"/>
<dbReference type="PaxDb" id="9606-ENSP00000399979"/>
<dbReference type="PeptideAtlas" id="Q9NWF4"/>
<dbReference type="Antibodypedia" id="23586">
    <property type="antibodies" value="175 antibodies from 23 providers"/>
</dbReference>
<dbReference type="DNASU" id="55065"/>
<dbReference type="Ensembl" id="ENST00000254853.10">
    <molecule id="Q9NWF4-1"/>
    <property type="protein sequence ID" value="ENSP00000254853.5"/>
    <property type="gene ID" value="ENSG00000132517.15"/>
</dbReference>
<dbReference type="Ensembl" id="ENST00000424747.1">
    <molecule id="Q9NWF4-1"/>
    <property type="protein sequence ID" value="ENSP00000399979.1"/>
    <property type="gene ID" value="ENSG00000132517.15"/>
</dbReference>
<dbReference type="GeneID" id="55065"/>
<dbReference type="KEGG" id="hsa:55065"/>
<dbReference type="MANE-Select" id="ENST00000254853.10">
    <property type="protein sequence ID" value="ENSP00000254853.5"/>
    <property type="RefSeq nucleotide sequence ID" value="NM_017986.4"/>
    <property type="RefSeq protein sequence ID" value="NP_060456.3"/>
</dbReference>
<dbReference type="UCSC" id="uc002gao.5">
    <molecule id="Q9NWF4-1"/>
    <property type="organism name" value="human"/>
</dbReference>
<dbReference type="AGR" id="HGNC:30225"/>
<dbReference type="CTD" id="55065"/>
<dbReference type="DisGeNET" id="55065"/>
<dbReference type="GeneCards" id="SLC52A1"/>
<dbReference type="GeneReviews" id="SLC52A1"/>
<dbReference type="HGNC" id="HGNC:30225">
    <property type="gene designation" value="SLC52A1"/>
</dbReference>
<dbReference type="HPA" id="ENSG00000132517">
    <property type="expression patterns" value="Group enriched (intestine, placenta, skin)"/>
</dbReference>
<dbReference type="MalaCards" id="SLC52A1"/>
<dbReference type="MIM" id="607883">
    <property type="type" value="gene"/>
</dbReference>
<dbReference type="MIM" id="615026">
    <property type="type" value="phenotype"/>
</dbReference>
<dbReference type="neXtProt" id="NX_Q9NWF4"/>
<dbReference type="OpenTargets" id="ENSG00000132517"/>
<dbReference type="Orphanet" id="411712">
    <property type="disease" value="Maternal riboflavin deficiency"/>
</dbReference>
<dbReference type="PharmGKB" id="PA134991217"/>
<dbReference type="VEuPathDB" id="HostDB:ENSG00000132517"/>
<dbReference type="eggNOG" id="KOG4255">
    <property type="taxonomic scope" value="Eukaryota"/>
</dbReference>
<dbReference type="GeneTree" id="ENSGT00390000003774"/>
<dbReference type="HOGENOM" id="CLU_034789_1_0_1"/>
<dbReference type="InParanoid" id="Q9NWF4"/>
<dbReference type="OMA" id="WICFLLM"/>
<dbReference type="OrthoDB" id="9995836at2759"/>
<dbReference type="PAN-GO" id="Q9NWF4">
    <property type="GO annotations" value="3 GO annotations based on evolutionary models"/>
</dbReference>
<dbReference type="PhylomeDB" id="Q9NWF4"/>
<dbReference type="TreeFam" id="TF314820"/>
<dbReference type="PathwayCommons" id="Q9NWF4"/>
<dbReference type="Reactome" id="R-HSA-196843">
    <property type="pathway name" value="Vitamin B2 (riboflavin) metabolism"/>
</dbReference>
<dbReference type="SignaLink" id="Q9NWF4"/>
<dbReference type="BioGRID-ORCS" id="55065">
    <property type="hits" value="15 hits in 1143 CRISPR screens"/>
</dbReference>
<dbReference type="GenomeRNAi" id="55065"/>
<dbReference type="Pharos" id="Q9NWF4">
    <property type="development level" value="Tbio"/>
</dbReference>
<dbReference type="PRO" id="PR:Q9NWF4"/>
<dbReference type="Proteomes" id="UP000005640">
    <property type="component" value="Chromosome 17"/>
</dbReference>
<dbReference type="RNAct" id="Q9NWF4">
    <property type="molecule type" value="protein"/>
</dbReference>
<dbReference type="Bgee" id="ENSG00000132517">
    <property type="expression patterns" value="Expressed in duodenum and 78 other cell types or tissues"/>
</dbReference>
<dbReference type="ExpressionAtlas" id="Q9NWF4">
    <property type="expression patterns" value="baseline and differential"/>
</dbReference>
<dbReference type="GO" id="GO:0005886">
    <property type="term" value="C:plasma membrane"/>
    <property type="evidence" value="ECO:0000314"/>
    <property type="project" value="UniProtKB"/>
</dbReference>
<dbReference type="GO" id="GO:0032217">
    <property type="term" value="F:riboflavin transmembrane transporter activity"/>
    <property type="evidence" value="ECO:0000314"/>
    <property type="project" value="UniProtKB"/>
</dbReference>
<dbReference type="GO" id="GO:0001618">
    <property type="term" value="F:virus receptor activity"/>
    <property type="evidence" value="ECO:0007669"/>
    <property type="project" value="UniProtKB-KW"/>
</dbReference>
<dbReference type="GO" id="GO:0006771">
    <property type="term" value="P:riboflavin metabolic process"/>
    <property type="evidence" value="ECO:0000304"/>
    <property type="project" value="Reactome"/>
</dbReference>
<dbReference type="GO" id="GO:0032218">
    <property type="term" value="P:riboflavin transport"/>
    <property type="evidence" value="ECO:0000314"/>
    <property type="project" value="UniProtKB"/>
</dbReference>
<dbReference type="InterPro" id="IPR009357">
    <property type="entry name" value="Riboflavin_transptr"/>
</dbReference>
<dbReference type="PANTHER" id="PTHR12929">
    <property type="entry name" value="SOLUTE CARRIER FAMILY 52"/>
    <property type="match status" value="1"/>
</dbReference>
<dbReference type="PANTHER" id="PTHR12929:SF20">
    <property type="entry name" value="SOLUTE CARRIER FAMILY 52, RIBOFLAVIN TRANSPORTER, MEMBER 1"/>
    <property type="match status" value="1"/>
</dbReference>
<dbReference type="Pfam" id="PF06237">
    <property type="entry name" value="SLC52_ribofla_tr"/>
    <property type="match status" value="1"/>
</dbReference>
<gene>
    <name evidence="16" type="primary">SLC52A1</name>
    <name type="synonym">GPR172B</name>
    <name type="synonym">PAR2</name>
    <name type="synonym">RFT1</name>
</gene>
<name>S52A1_HUMAN</name>
<evidence type="ECO:0000255" key="1"/>
<evidence type="ECO:0000256" key="2">
    <source>
        <dbReference type="SAM" id="MobiDB-lite"/>
    </source>
</evidence>
<evidence type="ECO:0000269" key="3">
    <source>
    </source>
</evidence>
<evidence type="ECO:0000269" key="4">
    <source>
    </source>
</evidence>
<evidence type="ECO:0000269" key="5">
    <source>
    </source>
</evidence>
<evidence type="ECO:0000269" key="6">
    <source>
    </source>
</evidence>
<evidence type="ECO:0000269" key="7">
    <source>
    </source>
</evidence>
<evidence type="ECO:0000269" key="8">
    <source>
    </source>
</evidence>
<evidence type="ECO:0000269" key="9">
    <source>
    </source>
</evidence>
<evidence type="ECO:0000269" key="10">
    <source ref="5"/>
</evidence>
<evidence type="ECO:0000303" key="11">
    <source>
    </source>
</evidence>
<evidence type="ECO:0000303" key="12">
    <source>
    </source>
</evidence>
<evidence type="ECO:0000303" key="13">
    <source>
    </source>
</evidence>
<evidence type="ECO:0000305" key="14"/>
<evidence type="ECO:0000305" key="15">
    <source>
    </source>
</evidence>
<evidence type="ECO:0000312" key="16">
    <source>
        <dbReference type="HGNC" id="HGNC:30225"/>
    </source>
</evidence>